<comment type="function">
    <text evidence="1">Giardins are involved in parasite attachment to the intestinal mucosa and in the cytoskeletal disassembly and reassembly that marks the transition from infectious trophozoite to transmissible cyst. They may interact with other cytoskeletal proteins such as microtubules in the microribbons or crossbridges, to maintain the integrity of the ventral disk (By similarity).</text>
</comment>
<comment type="subcellular location">
    <subcellularLocation>
        <location evidence="1">Cytoplasm</location>
        <location evidence="1">Cytoskeleton</location>
    </subcellularLocation>
</comment>
<comment type="similarity">
    <text evidence="2">Belongs to the annexin family. Giardin subunit alpha subfamily.</text>
</comment>
<accession>Q4VPP5</accession>
<dbReference type="EMBL" id="AY781327">
    <property type="protein sequence ID" value="AAX07978.1"/>
    <property type="molecule type" value="Genomic_DNA"/>
</dbReference>
<dbReference type="RefSeq" id="XP_001706961.1">
    <property type="nucleotide sequence ID" value="XM_001706909.1"/>
</dbReference>
<dbReference type="SMR" id="Q4VPP5"/>
<dbReference type="GeneID" id="5699856"/>
<dbReference type="KEGG" id="gla:GL50803_0014551"/>
<dbReference type="VEuPathDB" id="GiardiaDB:DHA2_14551"/>
<dbReference type="VEuPathDB" id="GiardiaDB:GL50581_1670"/>
<dbReference type="VEuPathDB" id="GiardiaDB:GL50803_0014551"/>
<dbReference type="VEuPathDB" id="GiardiaDB:QR46_1875"/>
<dbReference type="OrthoDB" id="37886at2759"/>
<dbReference type="GO" id="GO:0005737">
    <property type="term" value="C:cytoplasm"/>
    <property type="evidence" value="ECO:0007669"/>
    <property type="project" value="UniProtKB-KW"/>
</dbReference>
<dbReference type="GO" id="GO:0005874">
    <property type="term" value="C:microtubule"/>
    <property type="evidence" value="ECO:0007669"/>
    <property type="project" value="UniProtKB-KW"/>
</dbReference>
<dbReference type="GO" id="GO:0005886">
    <property type="term" value="C:plasma membrane"/>
    <property type="evidence" value="ECO:0007669"/>
    <property type="project" value="TreeGrafter"/>
</dbReference>
<dbReference type="GO" id="GO:0005509">
    <property type="term" value="F:calcium ion binding"/>
    <property type="evidence" value="ECO:0007669"/>
    <property type="project" value="InterPro"/>
</dbReference>
<dbReference type="GO" id="GO:0005544">
    <property type="term" value="F:calcium-dependent phospholipid binding"/>
    <property type="evidence" value="ECO:0007669"/>
    <property type="project" value="InterPro"/>
</dbReference>
<dbReference type="GO" id="GO:0001786">
    <property type="term" value="F:phosphatidylserine binding"/>
    <property type="evidence" value="ECO:0007669"/>
    <property type="project" value="TreeGrafter"/>
</dbReference>
<dbReference type="GO" id="GO:0007010">
    <property type="term" value="P:cytoskeleton organization"/>
    <property type="evidence" value="ECO:0007669"/>
    <property type="project" value="InterPro"/>
</dbReference>
<dbReference type="Gene3D" id="1.10.220.10">
    <property type="entry name" value="Annexin"/>
    <property type="match status" value="4"/>
</dbReference>
<dbReference type="InterPro" id="IPR008088">
    <property type="entry name" value="Alpha_giardin"/>
</dbReference>
<dbReference type="InterPro" id="IPR018502">
    <property type="entry name" value="Annexin_repeat"/>
</dbReference>
<dbReference type="InterPro" id="IPR037104">
    <property type="entry name" value="Annexin_sf"/>
</dbReference>
<dbReference type="PANTHER" id="PTHR10502">
    <property type="entry name" value="ANNEXIN"/>
    <property type="match status" value="1"/>
</dbReference>
<dbReference type="PANTHER" id="PTHR10502:SF102">
    <property type="entry name" value="ANNEXIN B11"/>
    <property type="match status" value="1"/>
</dbReference>
<dbReference type="Pfam" id="PF22293">
    <property type="entry name" value="ANXE1_4th"/>
    <property type="match status" value="1"/>
</dbReference>
<dbReference type="PRINTS" id="PR01712">
    <property type="entry name" value="ALPHAGIARDIN"/>
</dbReference>
<dbReference type="SUPFAM" id="SSF47874">
    <property type="entry name" value="Annexin"/>
    <property type="match status" value="1"/>
</dbReference>
<dbReference type="PROSITE" id="PS51897">
    <property type="entry name" value="ANNEXIN_2"/>
    <property type="match status" value="4"/>
</dbReference>
<proteinExistence type="inferred from homology"/>
<reference key="1">
    <citation type="journal article" date="2005" name="Int. J. Parasitol.">
        <title>Annexin-like alpha giardins: a new cytoskeletal gene family in Giardia lamblia.</title>
        <authorList>
            <person name="Weiland M.E.-L."/>
            <person name="McArthur A.G."/>
            <person name="Morrison H.G."/>
            <person name="Sogin M.L."/>
            <person name="Svard S.G."/>
        </authorList>
    </citation>
    <scope>NUCLEOTIDE SEQUENCE [GENOMIC DNA]</scope>
    <source>
        <strain>ATCC 50803 / WB-C6</strain>
    </source>
</reference>
<evidence type="ECO:0000250" key="1"/>
<evidence type="ECO:0000255" key="2">
    <source>
        <dbReference type="PROSITE-ProRule" id="PRU01245"/>
    </source>
</evidence>
<feature type="chain" id="PRO_0000288029" description="Giardin subunit alpha-6">
    <location>
        <begin position="1"/>
        <end position="297"/>
    </location>
</feature>
<feature type="repeat" description="Annexin 1" evidence="2">
    <location>
        <begin position="3"/>
        <end position="72"/>
    </location>
</feature>
<feature type="repeat" description="Annexin 2" evidence="2">
    <location>
        <begin position="74"/>
        <end position="146"/>
    </location>
</feature>
<feature type="repeat" description="Annexin 3" evidence="2">
    <location>
        <begin position="153"/>
        <end position="222"/>
    </location>
</feature>
<feature type="repeat" description="Annexin 4" evidence="2">
    <location>
        <begin position="226"/>
        <end position="295"/>
    </location>
</feature>
<name>GIA6_GIAIN</name>
<sequence length="297" mass="33148">MVTTVQDLAEQLRQAVESSNEQMIAGLASAYSGKEREKVLRAYLSATGTTAADAIRKALKNGPTENLLAYLWDKPGDVRAKLIRNALSGKNDEAALIDLVIHCSSEDWYNTCTEYTTDYKRVLNDDLLSDIGTKEQWTKVFKHWILHKRSDRFDIDGDEKRLVTAIGKKDYDTIAEMLGTTSVSEYANIVRRAEVTLGKTIDQALSAVWSKQDLAVLLAAHYELLHPARLAFHLLKQALDGKKPDEARIIRITALTFDTCLAVKYAASEAGYDIGSAFAKALDKRLAPLIKILWRVM</sequence>
<organism>
    <name type="scientific">Giardia intestinalis</name>
    <name type="common">Giardia lamblia</name>
    <dbReference type="NCBI Taxonomy" id="5741"/>
    <lineage>
        <taxon>Eukaryota</taxon>
        <taxon>Metamonada</taxon>
        <taxon>Diplomonadida</taxon>
        <taxon>Hexamitidae</taxon>
        <taxon>Giardiinae</taxon>
        <taxon>Giardia</taxon>
    </lineage>
</organism>
<keyword id="KW-0041">Annexin</keyword>
<keyword id="KW-0963">Cytoplasm</keyword>
<keyword id="KW-0206">Cytoskeleton</keyword>
<keyword id="KW-0493">Microtubule</keyword>
<keyword id="KW-0677">Repeat</keyword>
<protein>
    <recommendedName>
        <fullName>Giardin subunit alpha-6</fullName>
    </recommendedName>
</protein>